<accession>P10937</accession>
<name>PNMT_RAT</name>
<dbReference type="EC" id="2.1.1.28" evidence="3"/>
<dbReference type="EMBL" id="X75333">
    <property type="protein sequence ID" value="CAA53082.1"/>
    <property type="molecule type" value="Genomic_DNA"/>
</dbReference>
<dbReference type="EMBL" id="U11694">
    <property type="protein sequence ID" value="AAA91779.1"/>
    <property type="molecule type" value="Genomic_DNA"/>
</dbReference>
<dbReference type="EMBL" id="U11275">
    <property type="protein sequence ID" value="AAA91779.1"/>
    <property type="status" value="JOINED"/>
    <property type="molecule type" value="Genomic_DNA"/>
</dbReference>
<dbReference type="EMBL" id="X14211">
    <property type="protein sequence ID" value="CAA32428.1"/>
    <property type="molecule type" value="mRNA"/>
</dbReference>
<dbReference type="PIR" id="S38567">
    <property type="entry name" value="S38567"/>
</dbReference>
<dbReference type="RefSeq" id="NP_113714.1">
    <property type="nucleotide sequence ID" value="NM_031526.1"/>
</dbReference>
<dbReference type="SMR" id="P10937"/>
<dbReference type="FunCoup" id="P10937">
    <property type="interactions" value="46"/>
</dbReference>
<dbReference type="STRING" id="10116.ENSRNOP00000067392"/>
<dbReference type="PhosphoSitePlus" id="P10937"/>
<dbReference type="PaxDb" id="10116-ENSRNOP00000067392"/>
<dbReference type="GeneID" id="24661"/>
<dbReference type="KEGG" id="rno:24661"/>
<dbReference type="AGR" id="RGD:3361"/>
<dbReference type="CTD" id="5409"/>
<dbReference type="RGD" id="3361">
    <property type="gene designation" value="Pnmt"/>
</dbReference>
<dbReference type="eggNOG" id="ENOG502QT44">
    <property type="taxonomic scope" value="Eukaryota"/>
</dbReference>
<dbReference type="InParanoid" id="P10937"/>
<dbReference type="OrthoDB" id="27326at9989"/>
<dbReference type="PhylomeDB" id="P10937"/>
<dbReference type="Reactome" id="R-RNO-209905">
    <property type="pathway name" value="Catecholamine biosynthesis"/>
</dbReference>
<dbReference type="UniPathway" id="UPA00749">
    <property type="reaction ID" value="UER00736"/>
</dbReference>
<dbReference type="PRO" id="PR:P10937"/>
<dbReference type="Proteomes" id="UP000002494">
    <property type="component" value="Unplaced"/>
</dbReference>
<dbReference type="GO" id="GO:0030424">
    <property type="term" value="C:axon"/>
    <property type="evidence" value="ECO:0000314"/>
    <property type="project" value="RGD"/>
</dbReference>
<dbReference type="GO" id="GO:0005829">
    <property type="term" value="C:cytosol"/>
    <property type="evidence" value="ECO:0000318"/>
    <property type="project" value="GO_Central"/>
</dbReference>
<dbReference type="GO" id="GO:0030425">
    <property type="term" value="C:dendrite"/>
    <property type="evidence" value="ECO:0000314"/>
    <property type="project" value="RGD"/>
</dbReference>
<dbReference type="GO" id="GO:0043025">
    <property type="term" value="C:neuronal cell body"/>
    <property type="evidence" value="ECO:0000314"/>
    <property type="project" value="RGD"/>
</dbReference>
<dbReference type="GO" id="GO:0043204">
    <property type="term" value="C:perikaryon"/>
    <property type="evidence" value="ECO:0000314"/>
    <property type="project" value="RGD"/>
</dbReference>
<dbReference type="GO" id="GO:0043195">
    <property type="term" value="C:terminal bouton"/>
    <property type="evidence" value="ECO:0000314"/>
    <property type="project" value="RGD"/>
</dbReference>
<dbReference type="GO" id="GO:0043196">
    <property type="term" value="C:varicosity"/>
    <property type="evidence" value="ECO:0000314"/>
    <property type="project" value="RGD"/>
</dbReference>
<dbReference type="GO" id="GO:0008168">
    <property type="term" value="F:methyltransferase activity"/>
    <property type="evidence" value="ECO:0000304"/>
    <property type="project" value="RGD"/>
</dbReference>
<dbReference type="GO" id="GO:0004603">
    <property type="term" value="F:phenylethanolamine N-methyltransferase activity"/>
    <property type="evidence" value="ECO:0000314"/>
    <property type="project" value="UniProtKB"/>
</dbReference>
<dbReference type="GO" id="GO:0008757">
    <property type="term" value="F:S-adenosylmethionine-dependent methyltransferase activity"/>
    <property type="evidence" value="ECO:0000304"/>
    <property type="project" value="RGD"/>
</dbReference>
<dbReference type="GO" id="GO:0016740">
    <property type="term" value="F:transferase activity"/>
    <property type="evidence" value="ECO:0000304"/>
    <property type="project" value="RGD"/>
</dbReference>
<dbReference type="GO" id="GO:0030325">
    <property type="term" value="P:adrenal gland development"/>
    <property type="evidence" value="ECO:0000270"/>
    <property type="project" value="RGD"/>
</dbReference>
<dbReference type="GO" id="GO:0071549">
    <property type="term" value="P:cellular response to dexamethasone stimulus"/>
    <property type="evidence" value="ECO:0000270"/>
    <property type="project" value="RGD"/>
</dbReference>
<dbReference type="GO" id="GO:0071363">
    <property type="term" value="P:cellular response to growth factor stimulus"/>
    <property type="evidence" value="ECO:0000270"/>
    <property type="project" value="RGD"/>
</dbReference>
<dbReference type="GO" id="GO:0071375">
    <property type="term" value="P:cellular response to peptide hormone stimulus"/>
    <property type="evidence" value="ECO:0000270"/>
    <property type="project" value="RGD"/>
</dbReference>
<dbReference type="GO" id="GO:0042418">
    <property type="term" value="P:epinephrine biosynthetic process"/>
    <property type="evidence" value="ECO:0000314"/>
    <property type="project" value="RGD"/>
</dbReference>
<dbReference type="GO" id="GO:0032259">
    <property type="term" value="P:methylation"/>
    <property type="evidence" value="ECO:0007669"/>
    <property type="project" value="UniProtKB-KW"/>
</dbReference>
<dbReference type="GO" id="GO:0042415">
    <property type="term" value="P:norepinephrine metabolic process"/>
    <property type="evidence" value="ECO:0000314"/>
    <property type="project" value="RGD"/>
</dbReference>
<dbReference type="GO" id="GO:0014823">
    <property type="term" value="P:response to activity"/>
    <property type="evidence" value="ECO:0000270"/>
    <property type="project" value="RGD"/>
</dbReference>
<dbReference type="GO" id="GO:0045471">
    <property type="term" value="P:response to ethanol"/>
    <property type="evidence" value="ECO:0000270"/>
    <property type="project" value="RGD"/>
</dbReference>
<dbReference type="GO" id="GO:0045472">
    <property type="term" value="P:response to ether"/>
    <property type="evidence" value="ECO:0000270"/>
    <property type="project" value="RGD"/>
</dbReference>
<dbReference type="GO" id="GO:0001666">
    <property type="term" value="P:response to hypoxia"/>
    <property type="evidence" value="ECO:0000270"/>
    <property type="project" value="RGD"/>
</dbReference>
<dbReference type="GO" id="GO:0035902">
    <property type="term" value="P:response to immobilization stress"/>
    <property type="evidence" value="ECO:0000270"/>
    <property type="project" value="RGD"/>
</dbReference>
<dbReference type="GO" id="GO:0032868">
    <property type="term" value="P:response to insulin"/>
    <property type="evidence" value="ECO:0000270"/>
    <property type="project" value="RGD"/>
</dbReference>
<dbReference type="GO" id="GO:0035900">
    <property type="term" value="P:response to isolation stress"/>
    <property type="evidence" value="ECO:0000270"/>
    <property type="project" value="RGD"/>
</dbReference>
<dbReference type="GO" id="GO:0043434">
    <property type="term" value="P:response to peptide hormone"/>
    <property type="evidence" value="ECO:0000270"/>
    <property type="project" value="RGD"/>
</dbReference>
<dbReference type="GO" id="GO:0046498">
    <property type="term" value="P:S-adenosylhomocysteine metabolic process"/>
    <property type="evidence" value="ECO:0000304"/>
    <property type="project" value="RGD"/>
</dbReference>
<dbReference type="GO" id="GO:0046500">
    <property type="term" value="P:S-adenosylmethionine metabolic process"/>
    <property type="evidence" value="ECO:0000304"/>
    <property type="project" value="RGD"/>
</dbReference>
<dbReference type="GO" id="GO:0035176">
    <property type="term" value="P:social behavior"/>
    <property type="evidence" value="ECO:0000270"/>
    <property type="project" value="RGD"/>
</dbReference>
<dbReference type="FunFam" id="3.40.50.150:FF:000065">
    <property type="entry name" value="Phenylethanolamine N-methyltransferase"/>
    <property type="match status" value="1"/>
</dbReference>
<dbReference type="Gene3D" id="3.40.50.150">
    <property type="entry name" value="Vaccinia Virus protein VP39"/>
    <property type="match status" value="1"/>
</dbReference>
<dbReference type="InterPro" id="IPR025820">
    <property type="entry name" value="NNMT/PNMT/TEMT_CS"/>
</dbReference>
<dbReference type="InterPro" id="IPR000940">
    <property type="entry name" value="NNMT_TEMT_trans"/>
</dbReference>
<dbReference type="InterPro" id="IPR053384">
    <property type="entry name" value="SAM-dep_methyltransferase"/>
</dbReference>
<dbReference type="InterPro" id="IPR029063">
    <property type="entry name" value="SAM-dependent_MTases_sf"/>
</dbReference>
<dbReference type="NCBIfam" id="NF041360">
    <property type="entry name" value="GntF_guanitoxin"/>
    <property type="match status" value="1"/>
</dbReference>
<dbReference type="PANTHER" id="PTHR10867">
    <property type="entry name" value="NNMT/PNMT/TEMT FAMILY MEMBER"/>
    <property type="match status" value="1"/>
</dbReference>
<dbReference type="PANTHER" id="PTHR10867:SF18">
    <property type="entry name" value="PHENYLETHANOLAMINE N-METHYLTRANSFERASE"/>
    <property type="match status" value="1"/>
</dbReference>
<dbReference type="Pfam" id="PF01234">
    <property type="entry name" value="NNMT_PNMT_TEMT"/>
    <property type="match status" value="1"/>
</dbReference>
<dbReference type="PIRSF" id="PIRSF000384">
    <property type="entry name" value="PNMTase"/>
    <property type="match status" value="1"/>
</dbReference>
<dbReference type="SUPFAM" id="SSF53335">
    <property type="entry name" value="S-adenosyl-L-methionine-dependent methyltransferases"/>
    <property type="match status" value="1"/>
</dbReference>
<dbReference type="PROSITE" id="PS01100">
    <property type="entry name" value="NNMT_PNMT_TEMT"/>
    <property type="match status" value="1"/>
</dbReference>
<dbReference type="PROSITE" id="PS51681">
    <property type="entry name" value="SAM_MT_NNMT_PNMT_TEMT"/>
    <property type="match status" value="1"/>
</dbReference>
<organism>
    <name type="scientific">Rattus norvegicus</name>
    <name type="common">Rat</name>
    <dbReference type="NCBI Taxonomy" id="10116"/>
    <lineage>
        <taxon>Eukaryota</taxon>
        <taxon>Metazoa</taxon>
        <taxon>Chordata</taxon>
        <taxon>Craniata</taxon>
        <taxon>Vertebrata</taxon>
        <taxon>Euteleostomi</taxon>
        <taxon>Mammalia</taxon>
        <taxon>Eutheria</taxon>
        <taxon>Euarchontoglires</taxon>
        <taxon>Glires</taxon>
        <taxon>Rodentia</taxon>
        <taxon>Myomorpha</taxon>
        <taxon>Muroidea</taxon>
        <taxon>Muridae</taxon>
        <taxon>Murinae</taxon>
        <taxon>Rattus</taxon>
    </lineage>
</organism>
<keyword id="KW-0127">Catecholamine biosynthesis</keyword>
<keyword id="KW-0489">Methyltransferase</keyword>
<keyword id="KW-1185">Reference proteome</keyword>
<keyword id="KW-0949">S-adenosyl-L-methionine</keyword>
<keyword id="KW-0808">Transferase</keyword>
<reference key="1">
    <citation type="journal article" date="1994" name="J. Neurochem.">
        <title>Complete nucleotide sequence and tissue-specific expression of the rat phenylethanolamine N-methyltransferase gene.</title>
        <authorList>
            <person name="Suh Y.H."/>
            <person name="Chun Y.S."/>
            <person name="Lee I.S."/>
            <person name="Kim S.S."/>
            <person name="Choi W."/>
            <person name="Chong Y.H."/>
            <person name="Hong L."/>
            <person name="Kim S.H."/>
            <person name="Park C.W."/>
            <person name="Kim C.G."/>
        </authorList>
    </citation>
    <scope>NUCLEOTIDE SEQUENCE [GENOMIC DNA]</scope>
    <source>
        <strain>Sprague-Dawley</strain>
    </source>
</reference>
<reference key="2">
    <citation type="journal article" date="1995" name="Hypertension">
        <title>Investigation of the phenylethanolamine N-methyltransferase gene as a candidate gene for hypertension.</title>
        <authorList>
            <person name="Koike G."/>
            <person name="Jacob H.J."/>
            <person name="Krieger J.E."/>
            <person name="Szpirer C."/>
            <person name="Hoehe M.R."/>
            <person name="Horiuchi M."/>
            <person name="Dzau V.J."/>
        </authorList>
    </citation>
    <scope>NUCLEOTIDE SEQUENCE [GENOMIC DNA]</scope>
    <source>
        <strain>Wistar</strain>
        <tissue>Spleen</tissue>
    </source>
</reference>
<reference key="3">
    <citation type="journal article" date="1989" name="Brain Res. Mol. Brain Res.">
        <title>Isolation of a rat adrenal cDNA clone encoding phenylethanolamine N-methyltransferase and cold-induced alterations in adrenal PNMT mRNA and protein.</title>
        <authorList>
            <person name="Weisberg E.P."/>
            <person name="Baruchin A."/>
            <person name="Stachowiak M.K."/>
            <person name="Stricker E.M."/>
            <person name="Zigmond M.J."/>
            <person name="Kaplan B.B."/>
        </authorList>
    </citation>
    <scope>NUCLEOTIDE SEQUENCE [MRNA] OF 16-285</scope>
    <source>
        <tissue>Adrenal gland</tissue>
    </source>
</reference>
<reference key="4">
    <citation type="journal article" date="1989" name="Nucleic Acids Res.">
        <title>Cloning of the rat adrenal medullary phenylethanolamine-N-methyltransferase.</title>
        <authorList>
            <person name="Mezey E."/>
        </authorList>
    </citation>
    <scope>NUCLEOTIDE SEQUENCE [MRNA] OF 26-285</scope>
    <source>
        <strain>Sprague-Dawley</strain>
    </source>
</reference>
<reference key="5">
    <citation type="journal article" date="1962" name="J. Biol. Chem.">
        <title>Purification and properties of phenylethanolamine-N-methyl transferase.</title>
        <authorList>
            <person name="Axelrod J."/>
        </authorList>
    </citation>
    <scope>FUNCTION</scope>
    <scope>CATALYTIC ACTIVITY</scope>
    <scope>TISSUE SPECIFICITY</scope>
</reference>
<reference key="6">
    <citation type="journal article" date="1978" name="Neurochem. Res.">
        <title>Some properties of phenylethanolamine-N-methyltransferase of rat brain.</title>
        <authorList>
            <person name="Diaz Borges J.M."/>
            <person name="Urbina M."/>
            <person name="Drujan B.D."/>
        </authorList>
    </citation>
    <scope>FUNCTION</scope>
    <scope>CATALYTIC ACTIVITY</scope>
    <scope>BIOPHYSICOCHEMICAL PROPERTIES</scope>
    <scope>TISSUE SPECIFICITY</scope>
    <scope>ACTIVITY REGULATION</scope>
</reference>
<protein>
    <recommendedName>
        <fullName>Phenylethanolamine N-methyltransferase</fullName>
        <shortName>PNMTase</shortName>
        <ecNumber evidence="3">2.1.1.28</ecNumber>
    </recommendedName>
    <alternativeName>
        <fullName>Noradrenaline N-methyltransferase</fullName>
    </alternativeName>
</protein>
<comment type="function">
    <text evidence="1 2 3">Catalyzes the transmethylation of nonepinephrine (noradrenaline) to form epinephrine (adrenaline), using S-adenosyl-L-methionine as the methyl donor (By similarity). Other substrates include phenylethanolamine, octopamine and normetanephrine (PubMed:13863458, PubMed:683413).</text>
</comment>
<comment type="catalytic activity">
    <reaction evidence="3">
        <text>phenylethanolamine + S-adenosyl-L-methionine = N-methylphenylethanolamine + S-adenosyl-L-homocysteine + H(+)</text>
        <dbReference type="Rhea" id="RHEA:12176"/>
        <dbReference type="ChEBI" id="CHEBI:15378"/>
        <dbReference type="ChEBI" id="CHEBI:57741"/>
        <dbReference type="ChEBI" id="CHEBI:57856"/>
        <dbReference type="ChEBI" id="CHEBI:57946"/>
        <dbReference type="ChEBI" id="CHEBI:59789"/>
        <dbReference type="EC" id="2.1.1.28"/>
    </reaction>
    <physiologicalReaction direction="left-to-right" evidence="6">
        <dbReference type="Rhea" id="RHEA:12177"/>
    </physiologicalReaction>
</comment>
<comment type="catalytic activity">
    <reaction evidence="1">
        <text>(R)-noradrenaline + S-adenosyl-L-methionine = (R)-adrenaline + S-adenosyl-L-homocysteine + H(+)</text>
        <dbReference type="Rhea" id="RHEA:25269"/>
        <dbReference type="ChEBI" id="CHEBI:15378"/>
        <dbReference type="ChEBI" id="CHEBI:57856"/>
        <dbReference type="ChEBI" id="CHEBI:59789"/>
        <dbReference type="ChEBI" id="CHEBI:71406"/>
        <dbReference type="ChEBI" id="CHEBI:72587"/>
        <dbReference type="EC" id="2.1.1.28"/>
    </reaction>
    <physiologicalReaction direction="left-to-right" evidence="1">
        <dbReference type="Rhea" id="RHEA:25270"/>
    </physiologicalReaction>
</comment>
<comment type="catalytic activity">
    <reaction evidence="2 3">
        <text>(R)-normetanephrine + S-adenosyl-L-methionine = (R)-metanephrine + S-adenosyl-L-homocysteine + H(+)</text>
        <dbReference type="Rhea" id="RHEA:70683"/>
        <dbReference type="ChEBI" id="CHEBI:15378"/>
        <dbReference type="ChEBI" id="CHEBI:57856"/>
        <dbReference type="ChEBI" id="CHEBI:59789"/>
        <dbReference type="ChEBI" id="CHEBI:189645"/>
        <dbReference type="ChEBI" id="CHEBI:189646"/>
    </reaction>
    <physiologicalReaction direction="left-to-right" evidence="5">
        <dbReference type="Rhea" id="RHEA:70684"/>
    </physiologicalReaction>
</comment>
<comment type="catalytic activity">
    <reaction evidence="3">
        <text>(R)-octopamine + S-adenosyl-L-methionine = (R)-synephrine + S-adenosyl-L-homocysteine + H(+)</text>
        <dbReference type="Rhea" id="RHEA:70519"/>
        <dbReference type="ChEBI" id="CHEBI:15378"/>
        <dbReference type="ChEBI" id="CHEBI:57856"/>
        <dbReference type="ChEBI" id="CHEBI:59789"/>
        <dbReference type="ChEBI" id="CHEBI:63694"/>
        <dbReference type="ChEBI" id="CHEBI:141486"/>
    </reaction>
    <physiologicalReaction direction="left-to-right" evidence="6">
        <dbReference type="Rhea" id="RHEA:70520"/>
    </physiologicalReaction>
</comment>
<comment type="activity regulation">
    <text evidence="3">Inhibited by 3-methyl-l,2,3,4-tetrahydro[1]benzothieno[3,2-c]pyridine hydrochloride.</text>
</comment>
<comment type="biophysicochemical properties">
    <kinetics>
        <KM evidence="3">288 uM for normetanephrine (enzyme found in the brain)</KM>
        <KM evidence="3">272 uM for normetanephrine (enzyme found in the adrenal gland)</KM>
        <KM evidence="3">1.9 uM for S-adenosyl-L-methionine (enzyme found in the brain)</KM>
        <KM evidence="3">2.9 uM for S-adenosyl-L-methionine (enzyme found in the adrenal gland)</KM>
    </kinetics>
    <phDependence>
        <text evidence="3">Optimum pH is 7.9 in phosphate buffer.</text>
    </phDependence>
</comment>
<comment type="pathway">
    <text evidence="1">Catecholamine biosynthesis; (R)-adrenaline biosynthesis; (R)-adrenaline from (R)-noradrenaline: step 1/1.</text>
</comment>
<comment type="tissue specificity">
    <text evidence="2 3">Expressed in the adrenal medulla and brain.</text>
</comment>
<comment type="similarity">
    <text evidence="4">Belongs to the class I-like SAM-binding methyltransferase superfamily. NNMT/PNMT/TEMT family.</text>
</comment>
<evidence type="ECO:0000250" key="1">
    <source>
        <dbReference type="UniProtKB" id="P11086"/>
    </source>
</evidence>
<evidence type="ECO:0000269" key="2">
    <source>
    </source>
</evidence>
<evidence type="ECO:0000269" key="3">
    <source>
    </source>
</evidence>
<evidence type="ECO:0000305" key="4"/>
<evidence type="ECO:0000305" key="5">
    <source>
    </source>
</evidence>
<evidence type="ECO:0000305" key="6">
    <source>
    </source>
</evidence>
<proteinExistence type="evidence at protein level"/>
<feature type="initiator methionine" description="Removed" evidence="1">
    <location>
        <position position="1"/>
    </location>
</feature>
<feature type="chain" id="PRO_0000159711" description="Phenylethanolamine N-methyltransferase">
    <location>
        <begin position="2"/>
        <end position="285"/>
    </location>
</feature>
<feature type="binding site" evidence="1">
    <location>
        <position position="36"/>
    </location>
    <ligand>
        <name>S-adenosyl-L-methionine</name>
        <dbReference type="ChEBI" id="CHEBI:59789"/>
    </ligand>
</feature>
<feature type="binding site" evidence="1">
    <location>
        <position position="41"/>
    </location>
    <ligand>
        <name>S-adenosyl-L-methionine</name>
        <dbReference type="ChEBI" id="CHEBI:59789"/>
    </ligand>
</feature>
<feature type="binding site" evidence="1">
    <location>
        <begin position="80"/>
        <end position="81"/>
    </location>
    <ligand>
        <name>S-adenosyl-L-methionine</name>
        <dbReference type="ChEBI" id="CHEBI:59789"/>
    </ligand>
</feature>
<feature type="binding site" evidence="1">
    <location>
        <position position="86"/>
    </location>
    <ligand>
        <name>S-adenosyl-L-methionine</name>
        <dbReference type="ChEBI" id="CHEBI:59789"/>
    </ligand>
</feature>
<feature type="binding site" evidence="1">
    <location>
        <position position="102"/>
    </location>
    <ligand>
        <name>S-adenosyl-L-methionine</name>
        <dbReference type="ChEBI" id="CHEBI:59789"/>
    </ligand>
</feature>
<feature type="binding site" evidence="1">
    <location>
        <position position="107"/>
    </location>
    <ligand>
        <name>S-adenosyl-L-methionine</name>
        <dbReference type="ChEBI" id="CHEBI:59789"/>
    </ligand>
</feature>
<feature type="binding site" evidence="1">
    <location>
        <begin position="159"/>
        <end position="160"/>
    </location>
    <ligand>
        <name>S-adenosyl-L-methionine</name>
        <dbReference type="ChEBI" id="CHEBI:59789"/>
    </ligand>
</feature>
<feature type="binding site" evidence="1">
    <location>
        <position position="182"/>
    </location>
    <ligand>
        <name>S-adenosyl-L-methionine</name>
        <dbReference type="ChEBI" id="CHEBI:59789"/>
    </ligand>
</feature>
<feature type="binding site" evidence="1">
    <location>
        <position position="220"/>
    </location>
    <ligand>
        <name>octopamine</name>
        <dbReference type="ChEBI" id="CHEBI:58025"/>
    </ligand>
</feature>
<feature type="binding site" evidence="1">
    <location>
        <position position="268"/>
    </location>
    <ligand>
        <name>octopamine</name>
        <dbReference type="ChEBI" id="CHEBI:58025"/>
    </ligand>
</feature>
<feature type="sequence conflict" description="In Ref. 3." evidence="4" ref="3">
    <original>DS</original>
    <variation>LA</variation>
    <location>
        <begin position="16"/>
        <end position="17"/>
    </location>
</feature>
<feature type="sequence conflict" description="In Ref. 4; CAA32428." evidence="4" ref="4">
    <original>D</original>
    <variation>H</variation>
    <location>
        <position position="52"/>
    </location>
</feature>
<feature type="sequence conflict" description="In Ref. 4; CAA32428." evidence="4" ref="4">
    <original>T</original>
    <variation>A</variation>
    <location>
        <position position="204"/>
    </location>
</feature>
<feature type="sequence conflict" description="In Ref. 2 and 3." evidence="4" ref="2 3">
    <original>N</original>
    <variation>H</variation>
    <location>
        <position position="211"/>
    </location>
</feature>
<feature type="sequence conflict" description="In Ref. 2 and 3." evidence="4" ref="2 3">
    <original>F</original>
    <variation>L</variation>
    <location>
        <position position="214"/>
    </location>
</feature>
<feature type="sequence conflict" description="In Ref. 2; AAA91779." evidence="4" ref="2">
    <original>V</original>
    <variation>A</variation>
    <location>
        <position position="285"/>
    </location>
</feature>
<sequence length="285" mass="31670">MDRGSDPKHTAGMDSDSDPGQAEVALAYQRFEPRAYLRNNYAPPRGDLSNPDGVGPWKLRCMAQVFATGEVSGQVLIDIGSGPTIYQLLSACAHFEDITMTDFLEVNRQELGLWLREEPGAFDWSVYSQHVCLIEDKGESWQEKERQLRARVKRVLPIDVHKPQPLGASGLAPLPADALVSAFCLEAVSPDLPSFRQALYHITTLLRPGGNLLFIGALEESWYLAGEARLSVVPVSEEEVREALVCSGYEVRDLRTYIMPAHLRTGVDDVKGIFFAWAQKIEVQV</sequence>
<gene>
    <name type="primary">Pnmt</name>
</gene>